<name>IDI2_VIBPA</name>
<sequence>MAPQTNRKDLHLDAVLHHDMSMKKKTAGFESVEFEHCALPECDFNTIDLSTEFLGHRLALPFLISSMTGGARDAETINCRLAEAASELGIAMGVGSQRISLEESQHSGLGKTIRELAKGVPLYSNLGAAQLRDKGKLDNAQRAVEAIQADALFVHVNPMQEAFQKNGDHNWIGVLHAIEQLKPRVNVPIIIKEVGFGISGDVAQRLVDAGVDAIDVAGAGGTSWSAVEGYCQDNPHMQRAAELFRDWGIPTATCLAQIRAQHPKLPLIASGGIHNGLEAAKAIHLGANLVGQAGAVLKAATISTQLVVDHFEQMALELRLACFGTGSAKVNALTKARRL</sequence>
<evidence type="ECO:0000255" key="1">
    <source>
        <dbReference type="HAMAP-Rule" id="MF_00354"/>
    </source>
</evidence>
<organism>
    <name type="scientific">Vibrio parahaemolyticus serotype O3:K6 (strain RIMD 2210633)</name>
    <dbReference type="NCBI Taxonomy" id="223926"/>
    <lineage>
        <taxon>Bacteria</taxon>
        <taxon>Pseudomonadati</taxon>
        <taxon>Pseudomonadota</taxon>
        <taxon>Gammaproteobacteria</taxon>
        <taxon>Vibrionales</taxon>
        <taxon>Vibrionaceae</taxon>
        <taxon>Vibrio</taxon>
    </lineage>
</organism>
<feature type="chain" id="PRO_0000134439" description="Isopentenyl-diphosphate delta-isomerase">
    <location>
        <begin position="1"/>
        <end position="339"/>
    </location>
</feature>
<feature type="binding site" evidence="1">
    <location>
        <begin position="7"/>
        <end position="8"/>
    </location>
    <ligand>
        <name>substrate</name>
    </ligand>
</feature>
<feature type="binding site" evidence="1">
    <location>
        <position position="65"/>
    </location>
    <ligand>
        <name>FMN</name>
        <dbReference type="ChEBI" id="CHEBI:58210"/>
    </ligand>
</feature>
<feature type="binding site" evidence="1">
    <location>
        <begin position="66"/>
        <end position="68"/>
    </location>
    <ligand>
        <name>FMN</name>
        <dbReference type="ChEBI" id="CHEBI:58210"/>
    </ligand>
</feature>
<feature type="binding site" evidence="1">
    <location>
        <begin position="96"/>
        <end position="98"/>
    </location>
    <ligand>
        <name>substrate</name>
    </ligand>
</feature>
<feature type="binding site" evidence="1">
    <location>
        <position position="96"/>
    </location>
    <ligand>
        <name>FMN</name>
        <dbReference type="ChEBI" id="CHEBI:58210"/>
    </ligand>
</feature>
<feature type="binding site" evidence="1">
    <location>
        <position position="125"/>
    </location>
    <ligand>
        <name>FMN</name>
        <dbReference type="ChEBI" id="CHEBI:58210"/>
    </ligand>
</feature>
<feature type="binding site" evidence="1">
    <location>
        <position position="160"/>
    </location>
    <ligand>
        <name>substrate</name>
    </ligand>
</feature>
<feature type="binding site" evidence="1">
    <location>
        <position position="161"/>
    </location>
    <ligand>
        <name>Mg(2+)</name>
        <dbReference type="ChEBI" id="CHEBI:18420"/>
    </ligand>
</feature>
<feature type="binding site" evidence="1">
    <location>
        <position position="192"/>
    </location>
    <ligand>
        <name>FMN</name>
        <dbReference type="ChEBI" id="CHEBI:58210"/>
    </ligand>
</feature>
<feature type="binding site" evidence="1">
    <location>
        <position position="222"/>
    </location>
    <ligand>
        <name>FMN</name>
        <dbReference type="ChEBI" id="CHEBI:58210"/>
    </ligand>
</feature>
<feature type="binding site" evidence="1">
    <location>
        <begin position="293"/>
        <end position="294"/>
    </location>
    <ligand>
        <name>FMN</name>
        <dbReference type="ChEBI" id="CHEBI:58210"/>
    </ligand>
</feature>
<accession>Q87JH5</accession>
<gene>
    <name evidence="1" type="primary">fni</name>
    <name type="ordered locus">VPA0278</name>
</gene>
<keyword id="KW-0963">Cytoplasm</keyword>
<keyword id="KW-0285">Flavoprotein</keyword>
<keyword id="KW-0288">FMN</keyword>
<keyword id="KW-0413">Isomerase</keyword>
<keyword id="KW-0414">Isoprene biosynthesis</keyword>
<keyword id="KW-0460">Magnesium</keyword>
<keyword id="KW-0479">Metal-binding</keyword>
<keyword id="KW-0521">NADP</keyword>
<reference key="1">
    <citation type="journal article" date="2003" name="Lancet">
        <title>Genome sequence of Vibrio parahaemolyticus: a pathogenic mechanism distinct from that of V. cholerae.</title>
        <authorList>
            <person name="Makino K."/>
            <person name="Oshima K."/>
            <person name="Kurokawa K."/>
            <person name="Yokoyama K."/>
            <person name="Uda T."/>
            <person name="Tagomori K."/>
            <person name="Iijima Y."/>
            <person name="Najima M."/>
            <person name="Nakano M."/>
            <person name="Yamashita A."/>
            <person name="Kubota Y."/>
            <person name="Kimura S."/>
            <person name="Yasunaga T."/>
            <person name="Honda T."/>
            <person name="Shinagawa H."/>
            <person name="Hattori M."/>
            <person name="Iida T."/>
        </authorList>
    </citation>
    <scope>NUCLEOTIDE SEQUENCE [LARGE SCALE GENOMIC DNA]</scope>
    <source>
        <strain>RIMD 2210633</strain>
    </source>
</reference>
<dbReference type="EC" id="5.3.3.2" evidence="1"/>
<dbReference type="EMBL" id="BA000032">
    <property type="protein sequence ID" value="BAC61621.1"/>
    <property type="molecule type" value="Genomic_DNA"/>
</dbReference>
<dbReference type="RefSeq" id="NP_799788.1">
    <property type="nucleotide sequence ID" value="NC_004605.1"/>
</dbReference>
<dbReference type="RefSeq" id="WP_005481444.1">
    <property type="nucleotide sequence ID" value="NC_004605.1"/>
</dbReference>
<dbReference type="SMR" id="Q87JH5"/>
<dbReference type="GeneID" id="1190966"/>
<dbReference type="KEGG" id="vpa:VPA0278"/>
<dbReference type="PATRIC" id="fig|223926.6.peg.3231"/>
<dbReference type="eggNOG" id="COG1304">
    <property type="taxonomic scope" value="Bacteria"/>
</dbReference>
<dbReference type="HOGENOM" id="CLU_065515_1_0_6"/>
<dbReference type="Proteomes" id="UP000002493">
    <property type="component" value="Chromosome 2"/>
</dbReference>
<dbReference type="GO" id="GO:0005737">
    <property type="term" value="C:cytoplasm"/>
    <property type="evidence" value="ECO:0007669"/>
    <property type="project" value="UniProtKB-SubCell"/>
</dbReference>
<dbReference type="GO" id="GO:0010181">
    <property type="term" value="F:FMN binding"/>
    <property type="evidence" value="ECO:0007669"/>
    <property type="project" value="UniProtKB-UniRule"/>
</dbReference>
<dbReference type="GO" id="GO:0004452">
    <property type="term" value="F:isopentenyl-diphosphate delta-isomerase activity"/>
    <property type="evidence" value="ECO:0007669"/>
    <property type="project" value="UniProtKB-UniRule"/>
</dbReference>
<dbReference type="GO" id="GO:0000287">
    <property type="term" value="F:magnesium ion binding"/>
    <property type="evidence" value="ECO:0007669"/>
    <property type="project" value="UniProtKB-UniRule"/>
</dbReference>
<dbReference type="GO" id="GO:0070402">
    <property type="term" value="F:NADPH binding"/>
    <property type="evidence" value="ECO:0007669"/>
    <property type="project" value="UniProtKB-UniRule"/>
</dbReference>
<dbReference type="GO" id="GO:0016491">
    <property type="term" value="F:oxidoreductase activity"/>
    <property type="evidence" value="ECO:0007669"/>
    <property type="project" value="InterPro"/>
</dbReference>
<dbReference type="GO" id="GO:0008299">
    <property type="term" value="P:isoprenoid biosynthetic process"/>
    <property type="evidence" value="ECO:0007669"/>
    <property type="project" value="UniProtKB-UniRule"/>
</dbReference>
<dbReference type="CDD" id="cd02811">
    <property type="entry name" value="IDI-2_FMN"/>
    <property type="match status" value="1"/>
</dbReference>
<dbReference type="Gene3D" id="3.20.20.70">
    <property type="entry name" value="Aldolase class I"/>
    <property type="match status" value="1"/>
</dbReference>
<dbReference type="HAMAP" id="MF_00354">
    <property type="entry name" value="Idi_2"/>
    <property type="match status" value="1"/>
</dbReference>
<dbReference type="InterPro" id="IPR013785">
    <property type="entry name" value="Aldolase_TIM"/>
</dbReference>
<dbReference type="InterPro" id="IPR000262">
    <property type="entry name" value="FMN-dep_DH"/>
</dbReference>
<dbReference type="InterPro" id="IPR011179">
    <property type="entry name" value="IPdP_isomerase"/>
</dbReference>
<dbReference type="NCBIfam" id="TIGR02151">
    <property type="entry name" value="IPP_isom_2"/>
    <property type="match status" value="1"/>
</dbReference>
<dbReference type="PANTHER" id="PTHR43665">
    <property type="entry name" value="ISOPENTENYL-DIPHOSPHATE DELTA-ISOMERASE"/>
    <property type="match status" value="1"/>
</dbReference>
<dbReference type="PANTHER" id="PTHR43665:SF1">
    <property type="entry name" value="ISOPENTENYL-DIPHOSPHATE DELTA-ISOMERASE"/>
    <property type="match status" value="1"/>
</dbReference>
<dbReference type="Pfam" id="PF01070">
    <property type="entry name" value="FMN_dh"/>
    <property type="match status" value="2"/>
</dbReference>
<dbReference type="PIRSF" id="PIRSF003314">
    <property type="entry name" value="IPP_isomerase"/>
    <property type="match status" value="1"/>
</dbReference>
<dbReference type="SMART" id="SM01240">
    <property type="entry name" value="IMPDH"/>
    <property type="match status" value="1"/>
</dbReference>
<dbReference type="SUPFAM" id="SSF51395">
    <property type="entry name" value="FMN-linked oxidoreductases"/>
    <property type="match status" value="1"/>
</dbReference>
<comment type="function">
    <text evidence="1">Involved in the biosynthesis of isoprenoids. Catalyzes the 1,3-allylic rearrangement of the homoallylic substrate isopentenyl (IPP) to its allylic isomer, dimethylallyl diphosphate (DMAPP).</text>
</comment>
<comment type="catalytic activity">
    <reaction evidence="1">
        <text>isopentenyl diphosphate = dimethylallyl diphosphate</text>
        <dbReference type="Rhea" id="RHEA:23284"/>
        <dbReference type="ChEBI" id="CHEBI:57623"/>
        <dbReference type="ChEBI" id="CHEBI:128769"/>
        <dbReference type="EC" id="5.3.3.2"/>
    </reaction>
</comment>
<comment type="cofactor">
    <cofactor evidence="1">
        <name>FMN</name>
        <dbReference type="ChEBI" id="CHEBI:58210"/>
    </cofactor>
</comment>
<comment type="cofactor">
    <cofactor evidence="1">
        <name>NADPH</name>
        <dbReference type="ChEBI" id="CHEBI:57783"/>
    </cofactor>
</comment>
<comment type="cofactor">
    <cofactor evidence="1">
        <name>Mg(2+)</name>
        <dbReference type="ChEBI" id="CHEBI:18420"/>
    </cofactor>
</comment>
<comment type="subunit">
    <text evidence="1">Homooctamer. Dimer of tetramers.</text>
</comment>
<comment type="subcellular location">
    <subcellularLocation>
        <location evidence="1">Cytoplasm</location>
    </subcellularLocation>
</comment>
<comment type="similarity">
    <text evidence="1">Belongs to the IPP isomerase type 2 family.</text>
</comment>
<proteinExistence type="inferred from homology"/>
<protein>
    <recommendedName>
        <fullName evidence="1">Isopentenyl-diphosphate delta-isomerase</fullName>
        <shortName evidence="1">IPP isomerase</shortName>
        <ecNumber evidence="1">5.3.3.2</ecNumber>
    </recommendedName>
    <alternativeName>
        <fullName evidence="1">Isopentenyl diphosphate:dimethylallyl diphosphate isomerase</fullName>
    </alternativeName>
    <alternativeName>
        <fullName evidence="1">Isopentenyl pyrophosphate isomerase</fullName>
    </alternativeName>
    <alternativeName>
        <fullName evidence="1">Type 2 isopentenyl diphosphate isomerase</fullName>
        <shortName evidence="1">IDI-2</shortName>
    </alternativeName>
</protein>